<feature type="chain" id="PRO_0000402978" description="Putative carbamate hydrolase RutD">
    <location>
        <begin position="1"/>
        <end position="259"/>
    </location>
</feature>
<comment type="function">
    <text evidence="1">Involved in pyrimidine catabolism. May facilitate the hydrolysis of carbamate, a reaction that can also occur spontaneously.</text>
</comment>
<comment type="catalytic activity">
    <reaction evidence="1">
        <text>carbamate + 2 H(+) = NH4(+) + CO2</text>
        <dbReference type="Rhea" id="RHEA:15649"/>
        <dbReference type="ChEBI" id="CHEBI:13941"/>
        <dbReference type="ChEBI" id="CHEBI:15378"/>
        <dbReference type="ChEBI" id="CHEBI:16526"/>
        <dbReference type="ChEBI" id="CHEBI:28938"/>
    </reaction>
</comment>
<comment type="similarity">
    <text evidence="1">Belongs to the AB hydrolase superfamily. Hydrolase RutD family.</text>
</comment>
<proteinExistence type="inferred from homology"/>
<sequence>MFHEIHRCQHADAPLLVLSSGLGGSSRYWADDLAALTRDHDVLVYDHAGTGRSPADLPADYSIRHMAMELLTLLDSLGIQRCHFMGHALGGLVGLEIALLRPELLQSQVLINAWSSPNPHSARCFSVRKKLLLNSGPDAYVQAQALFLYPADWIAANGARLADDEAHALAHFPGTDNLLRRIHALQTFDVEASLARIQTPTLLIANRDDMLVPWQQSQHLAEALPNARLVLLEYGGHASNITDPLPFQRTLLDFLNAQT</sequence>
<gene>
    <name evidence="1" type="primary">rutD</name>
    <name type="ordered locus">PSPPH_1045</name>
</gene>
<name>RUTD_PSE14</name>
<evidence type="ECO:0000255" key="1">
    <source>
        <dbReference type="HAMAP-Rule" id="MF_00832"/>
    </source>
</evidence>
<keyword id="KW-0378">Hydrolase</keyword>
<reference key="1">
    <citation type="journal article" date="2005" name="J. Bacteriol.">
        <title>Whole-genome sequence analysis of Pseudomonas syringae pv. phaseolicola 1448A reveals divergence among pathovars in genes involved in virulence and transposition.</title>
        <authorList>
            <person name="Joardar V."/>
            <person name="Lindeberg M."/>
            <person name="Jackson R.W."/>
            <person name="Selengut J."/>
            <person name="Dodson R."/>
            <person name="Brinkac L.M."/>
            <person name="Daugherty S.C."/>
            <person name="DeBoy R.T."/>
            <person name="Durkin A.S."/>
            <person name="Gwinn Giglio M."/>
            <person name="Madupu R."/>
            <person name="Nelson W.C."/>
            <person name="Rosovitz M.J."/>
            <person name="Sullivan S.A."/>
            <person name="Crabtree J."/>
            <person name="Creasy T."/>
            <person name="Davidsen T.M."/>
            <person name="Haft D.H."/>
            <person name="Zafar N."/>
            <person name="Zhou L."/>
            <person name="Halpin R."/>
            <person name="Holley T."/>
            <person name="Khouri H.M."/>
            <person name="Feldblyum T.V."/>
            <person name="White O."/>
            <person name="Fraser C.M."/>
            <person name="Chatterjee A.K."/>
            <person name="Cartinhour S."/>
            <person name="Schneider D."/>
            <person name="Mansfield J.W."/>
            <person name="Collmer A."/>
            <person name="Buell R."/>
        </authorList>
    </citation>
    <scope>NUCLEOTIDE SEQUENCE [LARGE SCALE GENOMIC DNA]</scope>
    <source>
        <strain>1448A / Race 6</strain>
    </source>
</reference>
<dbReference type="EC" id="3.5.1.-" evidence="1"/>
<dbReference type="EMBL" id="CP000058">
    <property type="protein sequence ID" value="AAZ35275.1"/>
    <property type="molecule type" value="Genomic_DNA"/>
</dbReference>
<dbReference type="RefSeq" id="WP_011167872.1">
    <property type="nucleotide sequence ID" value="NC_005773.3"/>
</dbReference>
<dbReference type="SMR" id="Q48MQ7"/>
<dbReference type="ESTHER" id="pse14-q48mq7">
    <property type="family name" value="RutD"/>
</dbReference>
<dbReference type="KEGG" id="psp:PSPPH_1045"/>
<dbReference type="eggNOG" id="COG0596">
    <property type="taxonomic scope" value="Bacteria"/>
</dbReference>
<dbReference type="HOGENOM" id="CLU_020336_50_1_6"/>
<dbReference type="Proteomes" id="UP000000551">
    <property type="component" value="Chromosome"/>
</dbReference>
<dbReference type="GO" id="GO:0016811">
    <property type="term" value="F:hydrolase activity, acting on carbon-nitrogen (but not peptide) bonds, in linear amides"/>
    <property type="evidence" value="ECO:0007669"/>
    <property type="project" value="InterPro"/>
</dbReference>
<dbReference type="GO" id="GO:0004806">
    <property type="term" value="F:triacylglycerol lipase activity"/>
    <property type="evidence" value="ECO:0007669"/>
    <property type="project" value="TreeGrafter"/>
</dbReference>
<dbReference type="GO" id="GO:0046503">
    <property type="term" value="P:glycerolipid catabolic process"/>
    <property type="evidence" value="ECO:0007669"/>
    <property type="project" value="TreeGrafter"/>
</dbReference>
<dbReference type="GO" id="GO:0019740">
    <property type="term" value="P:nitrogen utilization"/>
    <property type="evidence" value="ECO:0007669"/>
    <property type="project" value="UniProtKB-UniRule"/>
</dbReference>
<dbReference type="GO" id="GO:0006212">
    <property type="term" value="P:uracil catabolic process"/>
    <property type="evidence" value="ECO:0007669"/>
    <property type="project" value="UniProtKB-UniRule"/>
</dbReference>
<dbReference type="Gene3D" id="3.40.50.1820">
    <property type="entry name" value="alpha/beta hydrolase"/>
    <property type="match status" value="1"/>
</dbReference>
<dbReference type="HAMAP" id="MF_00832">
    <property type="entry name" value="RutD"/>
    <property type="match status" value="1"/>
</dbReference>
<dbReference type="InterPro" id="IPR050471">
    <property type="entry name" value="AB_hydrolase"/>
</dbReference>
<dbReference type="InterPro" id="IPR000073">
    <property type="entry name" value="AB_hydrolase_1"/>
</dbReference>
<dbReference type="InterPro" id="IPR029058">
    <property type="entry name" value="AB_hydrolase_fold"/>
</dbReference>
<dbReference type="InterPro" id="IPR019913">
    <property type="entry name" value="Pyrimidine_utilisation_RutD"/>
</dbReference>
<dbReference type="NCBIfam" id="TIGR03611">
    <property type="entry name" value="RutD"/>
    <property type="match status" value="1"/>
</dbReference>
<dbReference type="PANTHER" id="PTHR43433:SF5">
    <property type="entry name" value="AB HYDROLASE-1 DOMAIN-CONTAINING PROTEIN"/>
    <property type="match status" value="1"/>
</dbReference>
<dbReference type="PANTHER" id="PTHR43433">
    <property type="entry name" value="HYDROLASE, ALPHA/BETA FOLD FAMILY PROTEIN"/>
    <property type="match status" value="1"/>
</dbReference>
<dbReference type="Pfam" id="PF12697">
    <property type="entry name" value="Abhydrolase_6"/>
    <property type="match status" value="1"/>
</dbReference>
<dbReference type="PRINTS" id="PR00111">
    <property type="entry name" value="ABHYDROLASE"/>
</dbReference>
<dbReference type="SUPFAM" id="SSF53474">
    <property type="entry name" value="alpha/beta-Hydrolases"/>
    <property type="match status" value="1"/>
</dbReference>
<protein>
    <recommendedName>
        <fullName evidence="1">Putative carbamate hydrolase RutD</fullName>
        <ecNumber evidence="1">3.5.1.-</ecNumber>
    </recommendedName>
    <alternativeName>
        <fullName evidence="1">Aminohydrolase</fullName>
    </alternativeName>
</protein>
<accession>Q48MQ7</accession>
<organism>
    <name type="scientific">Pseudomonas savastanoi pv. phaseolicola (strain 1448A / Race 6)</name>
    <name type="common">Pseudomonas syringae pv. phaseolicola (strain 1448A / Race 6)</name>
    <dbReference type="NCBI Taxonomy" id="264730"/>
    <lineage>
        <taxon>Bacteria</taxon>
        <taxon>Pseudomonadati</taxon>
        <taxon>Pseudomonadota</taxon>
        <taxon>Gammaproteobacteria</taxon>
        <taxon>Pseudomonadales</taxon>
        <taxon>Pseudomonadaceae</taxon>
        <taxon>Pseudomonas</taxon>
    </lineage>
</organism>